<proteinExistence type="evidence at transcript level"/>
<name>DAT11_ORYSJ</name>
<comment type="function">
    <text evidence="2">Involved in triacylglycerol (TAG) synthesis. Catalyzes the acylation of the sn-3 hydroxy group of sn-1,2-diacylglycerol using acyl-CoA.</text>
</comment>
<comment type="catalytic activity">
    <reaction evidence="6">
        <text>an acyl-CoA + a 1,2-diacyl-sn-glycerol = a triacyl-sn-glycerol + CoA</text>
        <dbReference type="Rhea" id="RHEA:10868"/>
        <dbReference type="ChEBI" id="CHEBI:17815"/>
        <dbReference type="ChEBI" id="CHEBI:57287"/>
        <dbReference type="ChEBI" id="CHEBI:58342"/>
        <dbReference type="ChEBI" id="CHEBI:64615"/>
        <dbReference type="EC" id="2.3.1.20"/>
    </reaction>
</comment>
<comment type="pathway">
    <text evidence="6">Glycerolipid metabolism; triacylglycerol biosynthesis.</text>
</comment>
<comment type="subcellular location">
    <subcellularLocation>
        <location evidence="2">Endoplasmic reticulum membrane</location>
        <topology evidence="3">Multi-pass membrane protein</topology>
    </subcellularLocation>
</comment>
<comment type="similarity">
    <text evidence="6">Belongs to the membrane-bound acyltransferase family. Sterol o-acyltransferase subfamily.</text>
</comment>
<comment type="sequence caution" evidence="6">
    <conflict type="erroneous gene model prediction">
        <sequence resource="EMBL-CDS" id="AAU10815"/>
    </conflict>
</comment>
<comment type="sequence caution" evidence="6">
    <conflict type="erroneous gene model prediction">
        <sequence resource="EMBL-CDS" id="AAV59457"/>
    </conflict>
</comment>
<feature type="chain" id="PRO_0000438909" description="Diacylglycerol O-acyltransferase 1-1">
    <location>
        <begin position="1"/>
        <end position="538"/>
    </location>
</feature>
<feature type="transmembrane region" description="Helical" evidence="3">
    <location>
        <begin position="136"/>
        <end position="156"/>
    </location>
</feature>
<feature type="transmembrane region" description="Helical" evidence="3">
    <location>
        <begin position="186"/>
        <end position="206"/>
    </location>
</feature>
<feature type="transmembrane region" description="Helical" evidence="3">
    <location>
        <begin position="218"/>
        <end position="238"/>
    </location>
</feature>
<feature type="transmembrane region" description="Helical" evidence="3">
    <location>
        <begin position="245"/>
        <end position="265"/>
    </location>
</feature>
<feature type="transmembrane region" description="Helical" evidence="3">
    <location>
        <begin position="293"/>
        <end position="313"/>
    </location>
</feature>
<feature type="transmembrane region" description="Helical" evidence="3">
    <location>
        <begin position="326"/>
        <end position="346"/>
    </location>
</feature>
<feature type="transmembrane region" description="Helical" evidence="3">
    <location>
        <begin position="382"/>
        <end position="402"/>
    </location>
</feature>
<feature type="transmembrane region" description="Helical" evidence="3">
    <location>
        <begin position="451"/>
        <end position="471"/>
    </location>
</feature>
<feature type="transmembrane region" description="Helical" evidence="3">
    <location>
        <begin position="474"/>
        <end position="494"/>
    </location>
</feature>
<feature type="transmembrane region" description="Helical" evidence="3">
    <location>
        <begin position="505"/>
        <end position="525"/>
    </location>
</feature>
<feature type="region of interest" description="Disordered" evidence="4">
    <location>
        <begin position="1"/>
        <end position="39"/>
    </location>
</feature>
<feature type="region of interest" description="Disordered" evidence="4">
    <location>
        <begin position="54"/>
        <end position="106"/>
    </location>
</feature>
<feature type="short sequence motif" description="FYXDWWN motif" evidence="1">
    <location>
        <begin position="409"/>
        <end position="415"/>
    </location>
</feature>
<feature type="compositionally biased region" description="Low complexity" evidence="4">
    <location>
        <begin position="69"/>
        <end position="83"/>
    </location>
</feature>
<feature type="active site" evidence="1">
    <location>
        <position position="464"/>
    </location>
</feature>
<evidence type="ECO:0000250" key="1">
    <source>
        <dbReference type="UniProtKB" id="O75907"/>
    </source>
</evidence>
<evidence type="ECO:0000250" key="2">
    <source>
        <dbReference type="UniProtKB" id="Q5GKZ7"/>
    </source>
</evidence>
<evidence type="ECO:0000255" key="3"/>
<evidence type="ECO:0000256" key="4">
    <source>
        <dbReference type="SAM" id="MobiDB-lite"/>
    </source>
</evidence>
<evidence type="ECO:0000303" key="5">
    <source>
    </source>
</evidence>
<evidence type="ECO:0000305" key="6"/>
<evidence type="ECO:0000312" key="7">
    <source>
        <dbReference type="EMBL" id="AAU10815.1"/>
    </source>
</evidence>
<evidence type="ECO:0000312" key="8">
    <source>
        <dbReference type="EMBL" id="AAV59457.1"/>
    </source>
</evidence>
<evidence type="ECO:0000312" key="9">
    <source>
        <dbReference type="EMBL" id="BAF16783.2"/>
    </source>
</evidence>
<gene>
    <name evidence="6" type="primary">DGAT1-1</name>
    <name evidence="5" type="synonym">DAGAT</name>
    <name evidence="9" type="ordered locus">Os05g0196800</name>
    <name evidence="6" type="ordered locus">LOC_Os05g10810</name>
    <name evidence="8" type="ORF">P0617H07.12</name>
    <name evidence="7" type="ORF">P0636E04.4</name>
</gene>
<keyword id="KW-0012">Acyltransferase</keyword>
<keyword id="KW-0256">Endoplasmic reticulum</keyword>
<keyword id="KW-0319">Glycerol metabolism</keyword>
<keyword id="KW-0444">Lipid biosynthesis</keyword>
<keyword id="KW-0443">Lipid metabolism</keyword>
<keyword id="KW-0472">Membrane</keyword>
<keyword id="KW-1185">Reference proteome</keyword>
<keyword id="KW-0808">Transferase</keyword>
<keyword id="KW-0812">Transmembrane</keyword>
<keyword id="KW-1133">Transmembrane helix</keyword>
<protein>
    <recommendedName>
        <fullName evidence="6">Diacylglycerol O-acyltransferase 1-1</fullName>
        <shortName evidence="6">OsDGAT1-1</shortName>
        <ecNumber evidence="6">2.3.1.20</ecNumber>
    </recommendedName>
</protein>
<dbReference type="EC" id="2.3.1.20" evidence="6"/>
<dbReference type="EMBL" id="AY858584">
    <property type="protein sequence ID" value="AAW47581.1"/>
    <property type="molecule type" value="mRNA"/>
</dbReference>
<dbReference type="EMBL" id="AC132493">
    <property type="protein sequence ID" value="AAU10815.1"/>
    <property type="status" value="ALT_SEQ"/>
    <property type="molecule type" value="Genomic_DNA"/>
</dbReference>
<dbReference type="EMBL" id="AC135427">
    <property type="protein sequence ID" value="AAV59457.1"/>
    <property type="status" value="ALT_SEQ"/>
    <property type="molecule type" value="Genomic_DNA"/>
</dbReference>
<dbReference type="EMBL" id="AP008211">
    <property type="protein sequence ID" value="BAF16783.2"/>
    <property type="molecule type" value="Genomic_DNA"/>
</dbReference>
<dbReference type="EMBL" id="AP014961">
    <property type="protein sequence ID" value="BAS92683.1"/>
    <property type="molecule type" value="Genomic_DNA"/>
</dbReference>
<dbReference type="RefSeq" id="XP_015639406.1">
    <property type="nucleotide sequence ID" value="XM_015783920.1"/>
</dbReference>
<dbReference type="SMR" id="Q5I396"/>
<dbReference type="FunCoup" id="Q5I396">
    <property type="interactions" value="904"/>
</dbReference>
<dbReference type="STRING" id="39947.Q5I396"/>
<dbReference type="PaxDb" id="39947-Q5I396"/>
<dbReference type="EnsemblPlants" id="Os05t0196800-01">
    <property type="protein sequence ID" value="Os05t0196800-01"/>
    <property type="gene ID" value="Os05g0196800"/>
</dbReference>
<dbReference type="Gramene" id="Os05t0196800-01">
    <property type="protein sequence ID" value="Os05t0196800-01"/>
    <property type="gene ID" value="Os05g0196800"/>
</dbReference>
<dbReference type="KEGG" id="dosa:Os05g0196800"/>
<dbReference type="eggNOG" id="KOG0380">
    <property type="taxonomic scope" value="Eukaryota"/>
</dbReference>
<dbReference type="HOGENOM" id="CLU_018190_0_1_1"/>
<dbReference type="InParanoid" id="Q5I396"/>
<dbReference type="OMA" id="VPNVYLW"/>
<dbReference type="OrthoDB" id="10039049at2759"/>
<dbReference type="UniPathway" id="UPA00282"/>
<dbReference type="Proteomes" id="UP000000763">
    <property type="component" value="Chromosome 5"/>
</dbReference>
<dbReference type="Proteomes" id="UP000059680">
    <property type="component" value="Chromosome 5"/>
</dbReference>
<dbReference type="GO" id="GO:0009941">
    <property type="term" value="C:chloroplast envelope"/>
    <property type="evidence" value="ECO:0000318"/>
    <property type="project" value="GO_Central"/>
</dbReference>
<dbReference type="GO" id="GO:0005789">
    <property type="term" value="C:endoplasmic reticulum membrane"/>
    <property type="evidence" value="ECO:0000250"/>
    <property type="project" value="UniProtKB"/>
</dbReference>
<dbReference type="GO" id="GO:0004144">
    <property type="term" value="F:diacylglycerol O-acyltransferase activity"/>
    <property type="evidence" value="ECO:0000250"/>
    <property type="project" value="UniProtKB"/>
</dbReference>
<dbReference type="GO" id="GO:0006071">
    <property type="term" value="P:glycerol metabolic process"/>
    <property type="evidence" value="ECO:0007669"/>
    <property type="project" value="UniProtKB-KW"/>
</dbReference>
<dbReference type="GO" id="GO:0019432">
    <property type="term" value="P:triglyceride biosynthetic process"/>
    <property type="evidence" value="ECO:0000250"/>
    <property type="project" value="UniProtKB"/>
</dbReference>
<dbReference type="InterPro" id="IPR027251">
    <property type="entry name" value="Diacylglycerol_acylTrfase1"/>
</dbReference>
<dbReference type="InterPro" id="IPR004299">
    <property type="entry name" value="MBOAT_fam"/>
</dbReference>
<dbReference type="InterPro" id="IPR014371">
    <property type="entry name" value="Oat_ACAT_DAG_ARE"/>
</dbReference>
<dbReference type="PANTHER" id="PTHR10408:SF12">
    <property type="entry name" value="DIACYLGLYCEROL O-ACYLTRANSFERASE 1-1"/>
    <property type="match status" value="1"/>
</dbReference>
<dbReference type="PANTHER" id="PTHR10408">
    <property type="entry name" value="STEROL O-ACYLTRANSFERASE"/>
    <property type="match status" value="1"/>
</dbReference>
<dbReference type="Pfam" id="PF03062">
    <property type="entry name" value="MBOAT"/>
    <property type="match status" value="1"/>
</dbReference>
<dbReference type="PIRSF" id="PIRSF000439">
    <property type="entry name" value="Oat_ACAT_DAG_ARE"/>
    <property type="match status" value="1"/>
</dbReference>
<dbReference type="PIRSF" id="PIRSF500231">
    <property type="entry name" value="Oat_dag"/>
    <property type="match status" value="1"/>
</dbReference>
<reference key="1">
    <citation type="journal article" date="2006" name="Theor. Appl. Genet.">
        <title>Cloning and comparative analysis of the gene encoding diacylglycerol acyltransferase from wild type and cultivated soybean.</title>
        <authorList>
            <person name="Wang H.W."/>
            <person name="Zhang J.S."/>
            <person name="Gai J.Y."/>
            <person name="Chen S.Y."/>
        </authorList>
    </citation>
    <scope>NUCLEOTIDE SEQUENCE [MRNA]</scope>
</reference>
<reference key="2">
    <citation type="journal article" date="2005" name="Mol. Genet. Genomics">
        <title>A fine physical map of the rice chromosome 5.</title>
        <authorList>
            <person name="Cheng C.-H."/>
            <person name="Chung M.C."/>
            <person name="Liu S.-M."/>
            <person name="Chen S.-K."/>
            <person name="Kao F.Y."/>
            <person name="Lin S.-J."/>
            <person name="Hsiao S.-H."/>
            <person name="Tseng I.C."/>
            <person name="Hsing Y.-I.C."/>
            <person name="Wu H.-P."/>
            <person name="Chen C.-S."/>
            <person name="Shaw J.-F."/>
            <person name="Wu J."/>
            <person name="Matsumoto T."/>
            <person name="Sasaki T."/>
            <person name="Chen H.-C."/>
            <person name="Chow T.-Y."/>
        </authorList>
    </citation>
    <scope>NUCLEOTIDE SEQUENCE [LARGE SCALE GENOMIC DNA]</scope>
    <source>
        <strain>cv. Nipponbare</strain>
    </source>
</reference>
<reference key="3">
    <citation type="journal article" date="2005" name="Nature">
        <title>The map-based sequence of the rice genome.</title>
        <authorList>
            <consortium name="International rice genome sequencing project (IRGSP)"/>
        </authorList>
    </citation>
    <scope>NUCLEOTIDE SEQUENCE [LARGE SCALE GENOMIC DNA]</scope>
    <source>
        <strain>cv. Nipponbare</strain>
    </source>
</reference>
<reference key="4">
    <citation type="journal article" date="2008" name="Nucleic Acids Res.">
        <title>The rice annotation project database (RAP-DB): 2008 update.</title>
        <authorList>
            <consortium name="The rice annotation project (RAP)"/>
        </authorList>
    </citation>
    <scope>GENOME REANNOTATION</scope>
    <source>
        <strain>cv. Nipponbare</strain>
    </source>
</reference>
<reference key="5">
    <citation type="journal article" date="2013" name="Rice">
        <title>Improvement of the Oryza sativa Nipponbare reference genome using next generation sequence and optical map data.</title>
        <authorList>
            <person name="Kawahara Y."/>
            <person name="de la Bastide M."/>
            <person name="Hamilton J.P."/>
            <person name="Kanamori H."/>
            <person name="McCombie W.R."/>
            <person name="Ouyang S."/>
            <person name="Schwartz D.C."/>
            <person name="Tanaka T."/>
            <person name="Wu J."/>
            <person name="Zhou S."/>
            <person name="Childs K.L."/>
            <person name="Davidson R.M."/>
            <person name="Lin H."/>
            <person name="Quesada-Ocampo L."/>
            <person name="Vaillancourt B."/>
            <person name="Sakai H."/>
            <person name="Lee S.S."/>
            <person name="Kim J."/>
            <person name="Numa H."/>
            <person name="Itoh T."/>
            <person name="Buell C.R."/>
            <person name="Matsumoto T."/>
        </authorList>
    </citation>
    <scope>GENOME REANNOTATION</scope>
    <source>
        <strain>cv. Nipponbare</strain>
    </source>
</reference>
<organism>
    <name type="scientific">Oryza sativa subsp. japonica</name>
    <name type="common">Rice</name>
    <dbReference type="NCBI Taxonomy" id="39947"/>
    <lineage>
        <taxon>Eukaryota</taxon>
        <taxon>Viridiplantae</taxon>
        <taxon>Streptophyta</taxon>
        <taxon>Embryophyta</taxon>
        <taxon>Tracheophyta</taxon>
        <taxon>Spermatophyta</taxon>
        <taxon>Magnoliopsida</taxon>
        <taxon>Liliopsida</taxon>
        <taxon>Poales</taxon>
        <taxon>Poaceae</taxon>
        <taxon>BOP clade</taxon>
        <taxon>Oryzoideae</taxon>
        <taxon>Oryzeae</taxon>
        <taxon>Oryzinae</taxon>
        <taxon>Oryza</taxon>
        <taxon>Oryza sativa</taxon>
    </lineage>
</organism>
<accession>Q5I396</accession>
<accession>Q0DK40</accession>
<accession>Q688L6</accession>
<sequence length="538" mass="59604">MVGSDGDGDGGGGEAHAPAAPAHHHRRPPRPRGGSGAIVEGFAAALRRRIRSGAAAAARASFGGDSGDEAASGEPSSSSSSSPSRRRGGDSNGAEASSAAGGGGGRGGGGDFSAFTFRAAAPVHRKAKESPLSSDAIFKQSHAGLFNLCIVVLVAVNSRLIIENLMKYGLLIRAGFWFNDKSLRDWPLLMCCLSLPAFPLGAFAVEKLAFNNVITDAVATCLHIFLSTTEIVYPVLVILKCDSAVLSGFLLIFIACIVWLKLVSFAHTNHDIRQLTMGGKKVDNELSTVDMDNLQPPTLGNLIYFMMAPTLCYQPSYPRTSCVRKGWLIRQIILYLIFTGLQGFIIEQYINPIVVNSQHPLKGGLLNAVETVLKLSLPNVYLWLCMFYAFFHLWLSILAEILRFGDREFYKDWWNAKTIDEYWRKWNMPVHKWVVRHIYFPCMRNGISKEVAVLISFLVSAVLHEICVAVPCRILKFWAFLGIMLQIPLIVLTAYLKSKFRDTMVGNMIFWFFFCIYGQPMCLLLYYHDVMNRIEKAR</sequence>